<accession>B9DY72</accession>
<evidence type="ECO:0000255" key="1">
    <source>
        <dbReference type="HAMAP-Rule" id="MF_00105"/>
    </source>
</evidence>
<name>GREA_CLOK1</name>
<reference key="1">
    <citation type="submission" date="2005-09" db="EMBL/GenBank/DDBJ databases">
        <title>Complete genome sequence of Clostridium kluyveri and comparative genomics of Clostridia species.</title>
        <authorList>
            <person name="Inui M."/>
            <person name="Nonaka H."/>
            <person name="Shinoda Y."/>
            <person name="Ikenaga Y."/>
            <person name="Abe M."/>
            <person name="Naito K."/>
            <person name="Vertes A.A."/>
            <person name="Yukawa H."/>
        </authorList>
    </citation>
    <scope>NUCLEOTIDE SEQUENCE [LARGE SCALE GENOMIC DNA]</scope>
    <source>
        <strain>NBRC 12016</strain>
    </source>
</reference>
<sequence length="159" mass="17768">MSGLKKYVMTYEGIKKLENELEYLKTVKRKEITEKIKVALSFGDLSENSEYDSAKNEQAFVEGRIVQLENMLKNASMVDEDEVPLDIVGIGSIVKVKDYDLDEEVEYLIVGSAEADPINNKISNESPVGKGLVGKKPGDVIEIQVPDGVSKYKILNIRR</sequence>
<protein>
    <recommendedName>
        <fullName evidence="1">Transcription elongation factor GreA</fullName>
    </recommendedName>
    <alternativeName>
        <fullName evidence="1">Transcript cleavage factor GreA</fullName>
    </alternativeName>
</protein>
<keyword id="KW-0175">Coiled coil</keyword>
<keyword id="KW-0238">DNA-binding</keyword>
<keyword id="KW-0804">Transcription</keyword>
<keyword id="KW-0805">Transcription regulation</keyword>
<dbReference type="EMBL" id="AP009049">
    <property type="protein sequence ID" value="BAH05197.1"/>
    <property type="molecule type" value="Genomic_DNA"/>
</dbReference>
<dbReference type="RefSeq" id="WP_011988767.1">
    <property type="nucleotide sequence ID" value="NC_011837.1"/>
</dbReference>
<dbReference type="SMR" id="B9DY72"/>
<dbReference type="KEGG" id="ckr:CKR_0146"/>
<dbReference type="HOGENOM" id="CLU_101379_2_1_9"/>
<dbReference type="Proteomes" id="UP000007969">
    <property type="component" value="Chromosome"/>
</dbReference>
<dbReference type="GO" id="GO:0003677">
    <property type="term" value="F:DNA binding"/>
    <property type="evidence" value="ECO:0007669"/>
    <property type="project" value="UniProtKB-UniRule"/>
</dbReference>
<dbReference type="GO" id="GO:0070063">
    <property type="term" value="F:RNA polymerase binding"/>
    <property type="evidence" value="ECO:0007669"/>
    <property type="project" value="InterPro"/>
</dbReference>
<dbReference type="GO" id="GO:0006354">
    <property type="term" value="P:DNA-templated transcription elongation"/>
    <property type="evidence" value="ECO:0007669"/>
    <property type="project" value="TreeGrafter"/>
</dbReference>
<dbReference type="GO" id="GO:0032784">
    <property type="term" value="P:regulation of DNA-templated transcription elongation"/>
    <property type="evidence" value="ECO:0007669"/>
    <property type="project" value="UniProtKB-UniRule"/>
</dbReference>
<dbReference type="FunFam" id="1.10.287.180:FF:000001">
    <property type="entry name" value="Transcription elongation factor GreA"/>
    <property type="match status" value="1"/>
</dbReference>
<dbReference type="FunFam" id="3.10.50.30:FF:000001">
    <property type="entry name" value="Transcription elongation factor GreA"/>
    <property type="match status" value="1"/>
</dbReference>
<dbReference type="Gene3D" id="3.10.50.30">
    <property type="entry name" value="Transcription elongation factor, GreA/GreB, C-terminal domain"/>
    <property type="match status" value="1"/>
</dbReference>
<dbReference type="Gene3D" id="1.10.287.180">
    <property type="entry name" value="Transcription elongation factor, GreA/GreB, N-terminal domain"/>
    <property type="match status" value="1"/>
</dbReference>
<dbReference type="HAMAP" id="MF_00105">
    <property type="entry name" value="GreA_GreB"/>
    <property type="match status" value="1"/>
</dbReference>
<dbReference type="InterPro" id="IPR036953">
    <property type="entry name" value="GreA/GreB_C_sf"/>
</dbReference>
<dbReference type="InterPro" id="IPR018151">
    <property type="entry name" value="TF_GreA/GreB_CS"/>
</dbReference>
<dbReference type="InterPro" id="IPR006359">
    <property type="entry name" value="Tscrpt_elong_fac_GreA"/>
</dbReference>
<dbReference type="InterPro" id="IPR028624">
    <property type="entry name" value="Tscrpt_elong_fac_GreA/B"/>
</dbReference>
<dbReference type="InterPro" id="IPR001437">
    <property type="entry name" value="Tscrpt_elong_fac_GreA/B_C"/>
</dbReference>
<dbReference type="InterPro" id="IPR023459">
    <property type="entry name" value="Tscrpt_elong_fac_GreA/B_fam"/>
</dbReference>
<dbReference type="InterPro" id="IPR022691">
    <property type="entry name" value="Tscrpt_elong_fac_GreA/B_N"/>
</dbReference>
<dbReference type="InterPro" id="IPR036805">
    <property type="entry name" value="Tscrpt_elong_fac_GreA/B_N_sf"/>
</dbReference>
<dbReference type="NCBIfam" id="TIGR01462">
    <property type="entry name" value="greA"/>
    <property type="match status" value="1"/>
</dbReference>
<dbReference type="NCBIfam" id="NF001263">
    <property type="entry name" value="PRK00226.1-4"/>
    <property type="match status" value="1"/>
</dbReference>
<dbReference type="PANTHER" id="PTHR30437">
    <property type="entry name" value="TRANSCRIPTION ELONGATION FACTOR GREA"/>
    <property type="match status" value="1"/>
</dbReference>
<dbReference type="PANTHER" id="PTHR30437:SF4">
    <property type="entry name" value="TRANSCRIPTION ELONGATION FACTOR GREA"/>
    <property type="match status" value="1"/>
</dbReference>
<dbReference type="Pfam" id="PF01272">
    <property type="entry name" value="GreA_GreB"/>
    <property type="match status" value="1"/>
</dbReference>
<dbReference type="Pfam" id="PF03449">
    <property type="entry name" value="GreA_GreB_N"/>
    <property type="match status" value="1"/>
</dbReference>
<dbReference type="PIRSF" id="PIRSF006092">
    <property type="entry name" value="GreA_GreB"/>
    <property type="match status" value="1"/>
</dbReference>
<dbReference type="SUPFAM" id="SSF54534">
    <property type="entry name" value="FKBP-like"/>
    <property type="match status" value="1"/>
</dbReference>
<dbReference type="SUPFAM" id="SSF46557">
    <property type="entry name" value="GreA transcript cleavage protein, N-terminal domain"/>
    <property type="match status" value="1"/>
</dbReference>
<dbReference type="PROSITE" id="PS00829">
    <property type="entry name" value="GREAB_1"/>
    <property type="match status" value="1"/>
</dbReference>
<dbReference type="PROSITE" id="PS00830">
    <property type="entry name" value="GREAB_2"/>
    <property type="match status" value="1"/>
</dbReference>
<comment type="function">
    <text evidence="1">Necessary for efficient RNA polymerase transcription elongation past template-encoded arresting sites. The arresting sites in DNA have the property of trapping a certain fraction of elongating RNA polymerases that pass through, resulting in locked ternary complexes. Cleavage of the nascent transcript by cleavage factors such as GreA or GreB allows the resumption of elongation from the new 3'terminus. GreA releases sequences of 2 to 3 nucleotides.</text>
</comment>
<comment type="similarity">
    <text evidence="1">Belongs to the GreA/GreB family.</text>
</comment>
<organism>
    <name type="scientific">Clostridium kluyveri (strain NBRC 12016)</name>
    <dbReference type="NCBI Taxonomy" id="583346"/>
    <lineage>
        <taxon>Bacteria</taxon>
        <taxon>Bacillati</taxon>
        <taxon>Bacillota</taxon>
        <taxon>Clostridia</taxon>
        <taxon>Eubacteriales</taxon>
        <taxon>Clostridiaceae</taxon>
        <taxon>Clostridium</taxon>
    </lineage>
</organism>
<proteinExistence type="inferred from homology"/>
<feature type="chain" id="PRO_1000118957" description="Transcription elongation factor GreA">
    <location>
        <begin position="1"/>
        <end position="159"/>
    </location>
</feature>
<feature type="coiled-coil region" evidence="1">
    <location>
        <begin position="14"/>
        <end position="76"/>
    </location>
</feature>
<gene>
    <name evidence="1" type="primary">greA</name>
    <name type="ordered locus">CKR_0146</name>
</gene>